<proteinExistence type="inferred from homology"/>
<organism>
    <name type="scientific">Balaenoptera bonaerensis</name>
    <name type="common">Antarctic minke whale</name>
    <name type="synonym">Balaenoptera acutorostrata subsp. bonaerensis</name>
    <dbReference type="NCBI Taxonomy" id="33556"/>
    <lineage>
        <taxon>Eukaryota</taxon>
        <taxon>Metazoa</taxon>
        <taxon>Chordata</taxon>
        <taxon>Craniata</taxon>
        <taxon>Vertebrata</taxon>
        <taxon>Euteleostomi</taxon>
        <taxon>Mammalia</taxon>
        <taxon>Eutheria</taxon>
        <taxon>Laurasiatheria</taxon>
        <taxon>Artiodactyla</taxon>
        <taxon>Whippomorpha</taxon>
        <taxon>Cetacea</taxon>
        <taxon>Mysticeti</taxon>
        <taxon>Balaenopteridae</taxon>
        <taxon>Balaenoptera</taxon>
    </lineage>
</organism>
<reference key="1">
    <citation type="journal article" date="2003" name="Mammal Study">
        <title>SRY gene structure and phylogeny in the cetacean species.</title>
        <authorList>
            <person name="Nishida S."/>
            <person name="Pastene L.A."/>
            <person name="Goto M."/>
            <person name="Koike H."/>
        </authorList>
    </citation>
    <scope>NUCLEOTIDE SEQUENCE [GENOMIC DNA]</scope>
</reference>
<sequence>MFRIVNGEDYSPAVQQRNSLDFGKAPSLLWTDNGGSNDRCETGGNGRESGQDRVKRPMNAFIVWSRDQRRKVALENPQMQNSEISKRLGYDWKMLTEAEKQPFFEEAQRLRAMHRDKYPGYKYRPRRKAKRPQKLLPADSSVLCSRMHIEETLYPFTYKDGCAKATRSRMESRLSYSQPTNTTSSLLPQEHRSSWTSLSHNRVT</sequence>
<accession>Q864R1</accession>
<name>SRY_BALBN</name>
<comment type="function">
    <text evidence="1 2">Transcriptional regulator that controls a genetic switch in male development. It is necessary and sufficient for initiating male sex determination by directing the development of supporting cell precursors (pre-Sertoli cells) as Sertoli rather than granulosa cells. Involved in different aspects of gene regulation including promoter activation or repression. Binds to the DNA consensus sequence 5'-[AT]AACAA[AT]-3'. SRY HMG box recognizes DNA by partial intercalation in the minor groove and promotes DNA bending. Also involved in pre-mRNA splicing (By similarity). In male adult brain involved in the maintenance of motor functions of dopaminergic neurons (By similarity).</text>
</comment>
<comment type="subunit">
    <text evidence="2">Interacts with CALM, EP300, HDAC3, KPNB1, ZNF208 isoform KRAB-O, PARP1, SLC9A3R2 and WT1. The interaction with EP300 modulates its DNA-binding activity. The interaction with KPNB1 is sensitive to dissociation by Ran in the GTP-bound form. Interaction with PARP1 impaired its DNA-binding activity.</text>
</comment>
<comment type="subcellular location">
    <subcellularLocation>
        <location evidence="2">Nucleus speckle</location>
    </subcellularLocation>
    <subcellularLocation>
        <location evidence="2">Cytoplasm</location>
    </subcellularLocation>
    <subcellularLocation>
        <location evidence="2">Nucleus</location>
    </subcellularLocation>
</comment>
<comment type="PTM">
    <text evidence="2">Acetylation of Lys-130 contributes to its nuclear localization and enhances its interaction with KPNB1. Deacetylated by HDAC3.</text>
</comment>
<comment type="similarity">
    <text evidence="5">Belongs to the SRY family.</text>
</comment>
<comment type="online information" name="Protein Spotlight">
    <link uri="https://www.proteinspotlight.org/back_issues/080"/>
    <text>The tenuous nature of sex - Issue 80 of March 2007</text>
</comment>
<keyword id="KW-0007">Acetylation</keyword>
<keyword id="KW-0010">Activator</keyword>
<keyword id="KW-0112">Calmodulin-binding</keyword>
<keyword id="KW-0963">Cytoplasm</keyword>
<keyword id="KW-0221">Differentiation</keyword>
<keyword id="KW-0238">DNA-binding</keyword>
<keyword id="KW-0539">Nucleus</keyword>
<keyword id="KW-0678">Repressor</keyword>
<keyword id="KW-0726">Sexual differentiation</keyword>
<keyword id="KW-0804">Transcription</keyword>
<keyword id="KW-0805">Transcription regulation</keyword>
<evidence type="ECO:0000250" key="1">
    <source>
        <dbReference type="UniProtKB" id="P36394"/>
    </source>
</evidence>
<evidence type="ECO:0000250" key="2">
    <source>
        <dbReference type="UniProtKB" id="Q05066"/>
    </source>
</evidence>
<evidence type="ECO:0000255" key="3">
    <source>
        <dbReference type="PROSITE-ProRule" id="PRU00267"/>
    </source>
</evidence>
<evidence type="ECO:0000256" key="4">
    <source>
        <dbReference type="SAM" id="MobiDB-lite"/>
    </source>
</evidence>
<evidence type="ECO:0000305" key="5"/>
<dbReference type="EMBL" id="AB108510">
    <property type="protein sequence ID" value="BAC75642.1"/>
    <property type="molecule type" value="Genomic_DNA"/>
</dbReference>
<dbReference type="SMR" id="Q864R1"/>
<dbReference type="GO" id="GO:0005737">
    <property type="term" value="C:cytoplasm"/>
    <property type="evidence" value="ECO:0007669"/>
    <property type="project" value="UniProtKB-SubCell"/>
</dbReference>
<dbReference type="GO" id="GO:0016607">
    <property type="term" value="C:nuclear speck"/>
    <property type="evidence" value="ECO:0007669"/>
    <property type="project" value="UniProtKB-SubCell"/>
</dbReference>
<dbReference type="GO" id="GO:0005634">
    <property type="term" value="C:nucleus"/>
    <property type="evidence" value="ECO:0000250"/>
    <property type="project" value="UniProtKB"/>
</dbReference>
<dbReference type="GO" id="GO:0005516">
    <property type="term" value="F:calmodulin binding"/>
    <property type="evidence" value="ECO:0007669"/>
    <property type="project" value="UniProtKB-KW"/>
</dbReference>
<dbReference type="GO" id="GO:0001228">
    <property type="term" value="F:DNA-binding transcription activator activity, RNA polymerase II-specific"/>
    <property type="evidence" value="ECO:0007669"/>
    <property type="project" value="TreeGrafter"/>
</dbReference>
<dbReference type="GO" id="GO:0000978">
    <property type="term" value="F:RNA polymerase II cis-regulatory region sequence-specific DNA binding"/>
    <property type="evidence" value="ECO:0007669"/>
    <property type="project" value="TreeGrafter"/>
</dbReference>
<dbReference type="GO" id="GO:0030154">
    <property type="term" value="P:cell differentiation"/>
    <property type="evidence" value="ECO:0007669"/>
    <property type="project" value="UniProtKB-KW"/>
</dbReference>
<dbReference type="GO" id="GO:0030238">
    <property type="term" value="P:male sex determination"/>
    <property type="evidence" value="ECO:0007669"/>
    <property type="project" value="InterPro"/>
</dbReference>
<dbReference type="GO" id="GO:0007548">
    <property type="term" value="P:sex differentiation"/>
    <property type="evidence" value="ECO:0007669"/>
    <property type="project" value="UniProtKB-KW"/>
</dbReference>
<dbReference type="CDD" id="cd22034">
    <property type="entry name" value="HMG-box_SoxA_SRY"/>
    <property type="match status" value="1"/>
</dbReference>
<dbReference type="FunFam" id="1.10.30.10:FF:000002">
    <property type="entry name" value="transcription factor Sox-2"/>
    <property type="match status" value="1"/>
</dbReference>
<dbReference type="Gene3D" id="1.10.30.10">
    <property type="entry name" value="High mobility group box domain"/>
    <property type="match status" value="1"/>
</dbReference>
<dbReference type="InterPro" id="IPR009071">
    <property type="entry name" value="HMG_box_dom"/>
</dbReference>
<dbReference type="InterPro" id="IPR036910">
    <property type="entry name" value="HMG_box_dom_sf"/>
</dbReference>
<dbReference type="InterPro" id="IPR017253">
    <property type="entry name" value="SRY"/>
</dbReference>
<dbReference type="InterPro" id="IPR050140">
    <property type="entry name" value="SRY-related_HMG-box_TF-like"/>
</dbReference>
<dbReference type="PANTHER" id="PTHR10270:SF161">
    <property type="entry name" value="SEX-DETERMINING REGION Y PROTEIN"/>
    <property type="match status" value="1"/>
</dbReference>
<dbReference type="PANTHER" id="PTHR10270">
    <property type="entry name" value="SOX TRANSCRIPTION FACTOR"/>
    <property type="match status" value="1"/>
</dbReference>
<dbReference type="Pfam" id="PF00505">
    <property type="entry name" value="HMG_box"/>
    <property type="match status" value="1"/>
</dbReference>
<dbReference type="PIRSF" id="PIRSF037653">
    <property type="entry name" value="SRY"/>
    <property type="match status" value="1"/>
</dbReference>
<dbReference type="SMART" id="SM00398">
    <property type="entry name" value="HMG"/>
    <property type="match status" value="1"/>
</dbReference>
<dbReference type="SUPFAM" id="SSF47095">
    <property type="entry name" value="HMG-box"/>
    <property type="match status" value="1"/>
</dbReference>
<dbReference type="PROSITE" id="PS50118">
    <property type="entry name" value="HMG_BOX_2"/>
    <property type="match status" value="1"/>
</dbReference>
<gene>
    <name type="primary">SRY</name>
    <name type="synonym">TDF</name>
</gene>
<feature type="chain" id="PRO_0000048639" description="Sex-determining region Y protein">
    <location>
        <begin position="1"/>
        <end position="204"/>
    </location>
</feature>
<feature type="DNA-binding region" description="HMG box" evidence="3">
    <location>
        <begin position="54"/>
        <end position="122"/>
    </location>
</feature>
<feature type="region of interest" description="Disordered" evidence="4">
    <location>
        <begin position="30"/>
        <end position="52"/>
    </location>
</feature>
<feature type="region of interest" description="Disordered" evidence="4">
    <location>
        <begin position="171"/>
        <end position="204"/>
    </location>
</feature>
<feature type="compositionally biased region" description="Polar residues" evidence="4">
    <location>
        <begin position="174"/>
        <end position="187"/>
    </location>
</feature>
<feature type="compositionally biased region" description="Polar residues" evidence="4">
    <location>
        <begin position="194"/>
        <end position="204"/>
    </location>
</feature>
<protein>
    <recommendedName>
        <fullName>Sex-determining region Y protein</fullName>
    </recommendedName>
    <alternativeName>
        <fullName>Testis-determining factor</fullName>
    </alternativeName>
</protein>